<reference key="1">
    <citation type="journal article" date="2002" name="Nature">
        <title>Sequence and analysis of chromosome 2 of Dictyostelium discoideum.</title>
        <authorList>
            <person name="Gloeckner G."/>
            <person name="Eichinger L."/>
            <person name="Szafranski K."/>
            <person name="Pachebat J.A."/>
            <person name="Bankier A.T."/>
            <person name="Dear P.H."/>
            <person name="Lehmann R."/>
            <person name="Baumgart C."/>
            <person name="Parra G."/>
            <person name="Abril J.F."/>
            <person name="Guigo R."/>
            <person name="Kumpf K."/>
            <person name="Tunggal B."/>
            <person name="Cox E.C."/>
            <person name="Quail M.A."/>
            <person name="Platzer M."/>
            <person name="Rosenthal A."/>
            <person name="Noegel A.A."/>
        </authorList>
    </citation>
    <scope>NUCLEOTIDE SEQUENCE [LARGE SCALE GENOMIC DNA]</scope>
    <source>
        <strain>AX4</strain>
    </source>
</reference>
<reference key="2">
    <citation type="journal article" date="2005" name="Nature">
        <title>The genome of the social amoeba Dictyostelium discoideum.</title>
        <authorList>
            <person name="Eichinger L."/>
            <person name="Pachebat J.A."/>
            <person name="Gloeckner G."/>
            <person name="Rajandream M.A."/>
            <person name="Sucgang R."/>
            <person name="Berriman M."/>
            <person name="Song J."/>
            <person name="Olsen R."/>
            <person name="Szafranski K."/>
            <person name="Xu Q."/>
            <person name="Tunggal B."/>
            <person name="Kummerfeld S."/>
            <person name="Madera M."/>
            <person name="Konfortov B.A."/>
            <person name="Rivero F."/>
            <person name="Bankier A.T."/>
            <person name="Lehmann R."/>
            <person name="Hamlin N."/>
            <person name="Davies R."/>
            <person name="Gaudet P."/>
            <person name="Fey P."/>
            <person name="Pilcher K."/>
            <person name="Chen G."/>
            <person name="Saunders D."/>
            <person name="Sodergren E.J."/>
            <person name="Davis P."/>
            <person name="Kerhornou A."/>
            <person name="Nie X."/>
            <person name="Hall N."/>
            <person name="Anjard C."/>
            <person name="Hemphill L."/>
            <person name="Bason N."/>
            <person name="Farbrother P."/>
            <person name="Desany B."/>
            <person name="Just E."/>
            <person name="Morio T."/>
            <person name="Rost R."/>
            <person name="Churcher C.M."/>
            <person name="Cooper J."/>
            <person name="Haydock S."/>
            <person name="van Driessche N."/>
            <person name="Cronin A."/>
            <person name="Goodhead I."/>
            <person name="Muzny D.M."/>
            <person name="Mourier T."/>
            <person name="Pain A."/>
            <person name="Lu M."/>
            <person name="Harper D."/>
            <person name="Lindsay R."/>
            <person name="Hauser H."/>
            <person name="James K.D."/>
            <person name="Quiles M."/>
            <person name="Madan Babu M."/>
            <person name="Saito T."/>
            <person name="Buchrieser C."/>
            <person name="Wardroper A."/>
            <person name="Felder M."/>
            <person name="Thangavelu M."/>
            <person name="Johnson D."/>
            <person name="Knights A."/>
            <person name="Loulseged H."/>
            <person name="Mungall K.L."/>
            <person name="Oliver K."/>
            <person name="Price C."/>
            <person name="Quail M.A."/>
            <person name="Urushihara H."/>
            <person name="Hernandez J."/>
            <person name="Rabbinowitsch E."/>
            <person name="Steffen D."/>
            <person name="Sanders M."/>
            <person name="Ma J."/>
            <person name="Kohara Y."/>
            <person name="Sharp S."/>
            <person name="Simmonds M.N."/>
            <person name="Spiegler S."/>
            <person name="Tivey A."/>
            <person name="Sugano S."/>
            <person name="White B."/>
            <person name="Walker D."/>
            <person name="Woodward J.R."/>
            <person name="Winckler T."/>
            <person name="Tanaka Y."/>
            <person name="Shaulsky G."/>
            <person name="Schleicher M."/>
            <person name="Weinstock G.M."/>
            <person name="Rosenthal A."/>
            <person name="Cox E.C."/>
            <person name="Chisholm R.L."/>
            <person name="Gibbs R.A."/>
            <person name="Loomis W.F."/>
            <person name="Platzer M."/>
            <person name="Kay R.R."/>
            <person name="Williams J.G."/>
            <person name="Dear P.H."/>
            <person name="Noegel A.A."/>
            <person name="Barrell B.G."/>
            <person name="Kuspa A."/>
        </authorList>
    </citation>
    <scope>NUCLEOTIDE SEQUENCE [LARGE SCALE GENOMIC DNA]</scope>
    <source>
        <strain>AX4</strain>
    </source>
</reference>
<keyword id="KW-1185">Reference proteome</keyword>
<sequence length="626" mass="72842">MILPNYLISKILNYLIFHEYQYEINYISLDKNYFDNNYYICEHFPASHILSYGLVCKELFEIVSSLITITSRLSFKCPRHSKFCIVQSKNITRFIEEHRPSYKTKSERDSIKSSLLKENNYGERYRTIQELLDIYPNLKELVYNINLLIFSDFNELRFWDEKFFEQFNSEFLKSTTSSNVKIKIRILLYCEPNSNIKTISTKKSILKFKNDIENSNKKVQVDLLYLKGLDSNMENQDDIFQLINNLTPKKLIIVNEKKILNGELQEIQDKNSGDGGGGGFFSHSSYLKVLQINNIKKIKIIKDFMDPFVFIGIENNIQLKSVDIGFHFHEILFHMIRLFKPVNKNNSSHLIENCKNLKKYISNSDFSFLDKDDFYCFKSICNADEEVIQPIQSIFRVSHCIKDWEEMCHSISISTTLKDLKIKEFCNKLHCQIWKSISSYSNKKSDGITDDGDDVGDRVDCCSHDKIHYRDCINGNEVMNKIPFFTDPFSLMISNNKSIETLHLEGMNGLLNETVLSSFIKNKSIKKLSLNYSLSHSNLDYFLTNVMPRNTTIKHLEIVLTDKLWCDKNTCCPNSLANFIQTNTTLSTLKCQFFDTIIDDSNDGAKKLTFESLINSSKIQKINIST</sequence>
<feature type="chain" id="PRO_0000362000" description="Putative uncharacterized protein DDB_G0275003">
    <location>
        <begin position="1"/>
        <end position="626"/>
    </location>
</feature>
<dbReference type="EMBL" id="AAFI02000012">
    <property type="protein sequence ID" value="EAL70394.1"/>
    <property type="molecule type" value="Genomic_DNA"/>
</dbReference>
<dbReference type="RefSeq" id="XP_644310.1">
    <property type="nucleotide sequence ID" value="XM_639218.1"/>
</dbReference>
<dbReference type="FunCoup" id="Q554L3">
    <property type="interactions" value="2"/>
</dbReference>
<dbReference type="PaxDb" id="44689-DDB0217592"/>
<dbReference type="EnsemblProtists" id="EAL70394">
    <property type="protein sequence ID" value="EAL70394"/>
    <property type="gene ID" value="DDB_G0275003"/>
</dbReference>
<dbReference type="GeneID" id="8619738"/>
<dbReference type="KEGG" id="ddi:DDB_G0275003"/>
<dbReference type="dictyBase" id="DDB_G0275003"/>
<dbReference type="VEuPathDB" id="AmoebaDB:DDB_G0275003"/>
<dbReference type="HOGENOM" id="CLU_455243_0_0_1"/>
<dbReference type="InParanoid" id="Q554L3"/>
<dbReference type="PRO" id="PR:Q554L3"/>
<dbReference type="Proteomes" id="UP000002195">
    <property type="component" value="Chromosome 2"/>
</dbReference>
<dbReference type="PANTHER" id="PTHR32423:SF24">
    <property type="entry name" value="CCZ1_INTU_HSP4 FIRST LONGIN DOMAIN-CONTAINING PROTEIN-RELATED"/>
    <property type="match status" value="1"/>
</dbReference>
<dbReference type="PANTHER" id="PTHR32423">
    <property type="entry name" value="SAP DOMAIN-CONTAINING PROTEIN-RELATED"/>
    <property type="match status" value="1"/>
</dbReference>
<dbReference type="SUPFAM" id="SSF52047">
    <property type="entry name" value="RNI-like"/>
    <property type="match status" value="1"/>
</dbReference>
<accession>Q554L3</accession>
<gene>
    <name type="ORF">DDB_G0275003</name>
</gene>
<protein>
    <recommendedName>
        <fullName>Putative uncharacterized protein DDB_G0275003</fullName>
    </recommendedName>
</protein>
<name>Y5003_DICDI</name>
<proteinExistence type="predicted"/>
<organism>
    <name type="scientific">Dictyostelium discoideum</name>
    <name type="common">Social amoeba</name>
    <dbReference type="NCBI Taxonomy" id="44689"/>
    <lineage>
        <taxon>Eukaryota</taxon>
        <taxon>Amoebozoa</taxon>
        <taxon>Evosea</taxon>
        <taxon>Eumycetozoa</taxon>
        <taxon>Dictyostelia</taxon>
        <taxon>Dictyosteliales</taxon>
        <taxon>Dictyosteliaceae</taxon>
        <taxon>Dictyostelium</taxon>
    </lineage>
</organism>